<dbReference type="EMBL" id="CR762215">
    <property type="protein sequence ID" value="CAJ83857.1"/>
    <property type="molecule type" value="mRNA"/>
</dbReference>
<dbReference type="EMBL" id="BC080466">
    <property type="protein sequence ID" value="AAH80466.1"/>
    <property type="status" value="ALT_SEQ"/>
    <property type="molecule type" value="mRNA"/>
</dbReference>
<dbReference type="RefSeq" id="NP_001007955.1">
    <property type="nucleotide sequence ID" value="NM_001007954.1"/>
</dbReference>
<dbReference type="RefSeq" id="XP_012821918.1">
    <property type="nucleotide sequence ID" value="XM_012966464.1"/>
</dbReference>
<dbReference type="RefSeq" id="XP_012821919.1">
    <property type="nucleotide sequence ID" value="XM_012966465.2"/>
</dbReference>
<dbReference type="SMR" id="Q28F21"/>
<dbReference type="FunCoup" id="Q28F21">
    <property type="interactions" value="448"/>
</dbReference>
<dbReference type="STRING" id="8364.ENSXETP00000001464"/>
<dbReference type="DNASU" id="493330"/>
<dbReference type="GeneID" id="493330"/>
<dbReference type="KEGG" id="xtr:493330"/>
<dbReference type="CTD" id="192683"/>
<dbReference type="InParanoid" id="Q28F21"/>
<dbReference type="OrthoDB" id="242866at2759"/>
<dbReference type="Proteomes" id="UP000008143">
    <property type="component" value="Chromosome 3"/>
</dbReference>
<dbReference type="Bgee" id="ENSXETG00000010669">
    <property type="expression patterns" value="Expressed in brain and 14 other cell types or tissues"/>
</dbReference>
<dbReference type="ExpressionAtlas" id="Q28F21">
    <property type="expression patterns" value="baseline"/>
</dbReference>
<dbReference type="GO" id="GO:0000139">
    <property type="term" value="C:Golgi membrane"/>
    <property type="evidence" value="ECO:0000250"/>
    <property type="project" value="UniProtKB"/>
</dbReference>
<dbReference type="GO" id="GO:0005886">
    <property type="term" value="C:plasma membrane"/>
    <property type="evidence" value="ECO:0000250"/>
    <property type="project" value="UniProtKB"/>
</dbReference>
<dbReference type="GO" id="GO:0055038">
    <property type="term" value="C:recycling endosome membrane"/>
    <property type="evidence" value="ECO:0007669"/>
    <property type="project" value="UniProtKB-SubCell"/>
</dbReference>
<dbReference type="GO" id="GO:0030672">
    <property type="term" value="C:synaptic vesicle membrane"/>
    <property type="evidence" value="ECO:0007669"/>
    <property type="project" value="UniProtKB-SubCell"/>
</dbReference>
<dbReference type="GO" id="GO:0006887">
    <property type="term" value="P:exocytosis"/>
    <property type="evidence" value="ECO:0007669"/>
    <property type="project" value="UniProtKB-KW"/>
</dbReference>
<dbReference type="GO" id="GO:0045956">
    <property type="term" value="P:positive regulation of calcium ion-dependent exocytosis"/>
    <property type="evidence" value="ECO:0000250"/>
    <property type="project" value="UniProtKB"/>
</dbReference>
<dbReference type="GO" id="GO:0001819">
    <property type="term" value="P:positive regulation of cytokine production"/>
    <property type="evidence" value="ECO:0000250"/>
    <property type="project" value="UniProtKB"/>
</dbReference>
<dbReference type="GO" id="GO:0015031">
    <property type="term" value="P:protein transport"/>
    <property type="evidence" value="ECO:0007669"/>
    <property type="project" value="UniProtKB-KW"/>
</dbReference>
<dbReference type="InterPro" id="IPR007273">
    <property type="entry name" value="SCAMP"/>
</dbReference>
<dbReference type="PANTHER" id="PTHR10687:SF5">
    <property type="entry name" value="SECRETORY CARRIER-ASSOCIATED MEMBRANE PROTEIN 5"/>
    <property type="match status" value="1"/>
</dbReference>
<dbReference type="PANTHER" id="PTHR10687">
    <property type="entry name" value="SECRETORY CARRIER-ASSOCIATED MEMBRANE PROTEIN SCAMP"/>
    <property type="match status" value="1"/>
</dbReference>
<dbReference type="Pfam" id="PF04144">
    <property type="entry name" value="SCAMP"/>
    <property type="match status" value="1"/>
</dbReference>
<organism>
    <name type="scientific">Xenopus tropicalis</name>
    <name type="common">Western clawed frog</name>
    <name type="synonym">Silurana tropicalis</name>
    <dbReference type="NCBI Taxonomy" id="8364"/>
    <lineage>
        <taxon>Eukaryota</taxon>
        <taxon>Metazoa</taxon>
        <taxon>Chordata</taxon>
        <taxon>Craniata</taxon>
        <taxon>Vertebrata</taxon>
        <taxon>Euteleostomi</taxon>
        <taxon>Amphibia</taxon>
        <taxon>Batrachia</taxon>
        <taxon>Anura</taxon>
        <taxon>Pipoidea</taxon>
        <taxon>Pipidae</taxon>
        <taxon>Xenopodinae</taxon>
        <taxon>Xenopus</taxon>
        <taxon>Silurana</taxon>
    </lineage>
</organism>
<accession>Q28F21</accession>
<accession>Q66KC1</accession>
<proteinExistence type="evidence at transcript level"/>
<feature type="chain" id="PRO_0000370557" description="Secretory carrier-associated membrane protein 5">
    <location>
        <begin position="1"/>
        <end position="231"/>
    </location>
</feature>
<feature type="topological domain" description="Cytoplasmic" evidence="2">
    <location>
        <begin position="1"/>
        <end position="39"/>
    </location>
</feature>
<feature type="transmembrane region" description="Helical" evidence="2">
    <location>
        <begin position="40"/>
        <end position="60"/>
    </location>
</feature>
<feature type="topological domain" description="Extracellular" evidence="2">
    <location>
        <begin position="61"/>
        <end position="67"/>
    </location>
</feature>
<feature type="transmembrane region" description="Helical" evidence="2">
    <location>
        <begin position="68"/>
        <end position="88"/>
    </location>
</feature>
<feature type="topological domain" description="Cytoplasmic" evidence="2">
    <location>
        <begin position="89"/>
        <end position="102"/>
    </location>
</feature>
<feature type="transmembrane region" description="Helical" evidence="2">
    <location>
        <begin position="103"/>
        <end position="125"/>
    </location>
</feature>
<feature type="topological domain" description="Extracellular" evidence="2">
    <location>
        <begin position="126"/>
        <end position="148"/>
    </location>
</feature>
<feature type="transmembrane region" description="Helical" evidence="2">
    <location>
        <begin position="149"/>
        <end position="169"/>
    </location>
</feature>
<feature type="topological domain" description="Cytoplasmic" evidence="2">
    <location>
        <begin position="170"/>
        <end position="231"/>
    </location>
</feature>
<sequence>MAEKANNFPPLPRFIPLKPCFHQDFENDIPDLHRTTCKRLYSLWMLNSITLGVNLIGCLAWMIGGGGAINFGLAILWVILFTPCSYVCWFRPAYKAFKTDSSFNFMAFFFTFSAQLVISIIQAVGIPGWGVCGWIATVGFFGTSVGAAVVMLFPTILFTAVAVLSFVALTKVHRFYRGAGGSLSKAQEEWTTGAWKNPHVQQAAQNAAQGAMSHNDPQYSATPNYGYSNQM</sequence>
<comment type="function">
    <text evidence="1">Required for the calcium-dependent exocytosis of signal sequence-containing cytokines. Probably acts in cooperation with the SNARE machinery (By similarity).</text>
</comment>
<comment type="subcellular location">
    <subcellularLocation>
        <location evidence="1">Cell membrane</location>
        <topology evidence="1">Multi-pass membrane protein</topology>
    </subcellularLocation>
    <subcellularLocation>
        <location evidence="1">Golgi apparatus membrane</location>
        <topology evidence="1">Multi-pass membrane protein</topology>
    </subcellularLocation>
    <subcellularLocation>
        <location evidence="1">Golgi apparatus</location>
        <location evidence="1">trans-Golgi network membrane</location>
        <topology evidence="1">Multi-pass membrane protein</topology>
    </subcellularLocation>
    <subcellularLocation>
        <location evidence="1">Recycling endosome membrane</location>
        <topology evidence="1">Multi-pass membrane protein</topology>
    </subcellularLocation>
    <subcellularLocation>
        <location evidence="1">Cytoplasmic vesicle</location>
        <location evidence="1">Secretory vesicle</location>
        <location evidence="1">Synaptic vesicle membrane</location>
        <topology evidence="1">Multi-pass membrane protein</topology>
    </subcellularLocation>
    <text evidence="1">Mainly localizes in Golgi apparatus membrane. Upon calcium-triggered exocytosis, it translocates to the cell membrane. Highly enriched in synaptic vesicles (By similarity).</text>
</comment>
<comment type="similarity">
    <text evidence="3">Belongs to the SCAMP family. SCAMP5 subfamily.</text>
</comment>
<comment type="sequence caution" evidence="3">
    <conflict type="erroneous termination">
        <sequence resource="EMBL-CDS" id="AAH80466"/>
    </conflict>
    <text>Truncated C-terminus.</text>
</comment>
<name>SCAM5_XENTR</name>
<gene>
    <name type="primary">scamp5</name>
    <name type="ORF">TGas073j15.1</name>
</gene>
<protein>
    <recommendedName>
        <fullName>Secretory carrier-associated membrane protein 5</fullName>
        <shortName>Secretory carrier membrane protein 5</shortName>
    </recommendedName>
</protein>
<evidence type="ECO:0000250" key="1"/>
<evidence type="ECO:0000255" key="2"/>
<evidence type="ECO:0000305" key="3"/>
<reference key="1">
    <citation type="submission" date="2006-10" db="EMBL/GenBank/DDBJ databases">
        <authorList>
            <consortium name="Sanger Xenopus tropicalis EST/cDNA project"/>
        </authorList>
    </citation>
    <scope>NUCLEOTIDE SEQUENCE [LARGE SCALE MRNA]</scope>
    <source>
        <tissue>Gastrula</tissue>
    </source>
</reference>
<reference key="2">
    <citation type="submission" date="2004-08" db="EMBL/GenBank/DDBJ databases">
        <authorList>
            <consortium name="NIH - Xenopus Gene Collection (XGC) project"/>
        </authorList>
    </citation>
    <scope>NUCLEOTIDE SEQUENCE [LARGE SCALE MRNA]</scope>
    <source>
        <tissue>Embryo</tissue>
    </source>
</reference>
<keyword id="KW-1003">Cell membrane</keyword>
<keyword id="KW-0968">Cytoplasmic vesicle</keyword>
<keyword id="KW-0967">Endosome</keyword>
<keyword id="KW-0268">Exocytosis</keyword>
<keyword id="KW-0333">Golgi apparatus</keyword>
<keyword id="KW-0472">Membrane</keyword>
<keyword id="KW-0653">Protein transport</keyword>
<keyword id="KW-1185">Reference proteome</keyword>
<keyword id="KW-0770">Synapse</keyword>
<keyword id="KW-0812">Transmembrane</keyword>
<keyword id="KW-1133">Transmembrane helix</keyword>
<keyword id="KW-0813">Transport</keyword>